<keyword id="KW-1003">Cell membrane</keyword>
<keyword id="KW-0968">Cytoplasmic vesicle</keyword>
<keyword id="KW-0551">Lipid droplet</keyword>
<keyword id="KW-0472">Membrane</keyword>
<keyword id="KW-0597">Phosphoprotein</keyword>
<keyword id="KW-1185">Reference proteome</keyword>
<keyword id="KW-0677">Repeat</keyword>
<keyword id="KW-0812">Transmembrane</keyword>
<keyword id="KW-1133">Transmembrane helix</keyword>
<keyword id="KW-0813">Transport</keyword>
<protein>
    <recommendedName>
        <fullName evidence="7">Aquaporin-7</fullName>
        <shortName>AQP-7</shortName>
    </recommendedName>
    <alternativeName>
        <fullName>Aquaglyceroporin-7</fullName>
    </alternativeName>
</protein>
<feature type="chain" id="PRO_0000063960" description="Aquaporin-7">
    <location>
        <begin position="1"/>
        <end position="269"/>
    </location>
</feature>
<feature type="topological domain" description="Cytoplasmic" evidence="1">
    <location>
        <begin position="1"/>
        <end position="20"/>
    </location>
</feature>
<feature type="transmembrane region" description="Helical; Name=1" evidence="1">
    <location>
        <begin position="21"/>
        <end position="38"/>
    </location>
</feature>
<feature type="topological domain" description="Extracellular" evidence="1">
    <location>
        <begin position="39"/>
        <end position="51"/>
    </location>
</feature>
<feature type="transmembrane region" description="Helical; Name=2" evidence="1">
    <location>
        <begin position="52"/>
        <end position="69"/>
    </location>
</feature>
<feature type="topological domain" description="Cytoplasmic" evidence="1">
    <location>
        <begin position="70"/>
        <end position="73"/>
    </location>
</feature>
<feature type="intramembrane region" description="Discontinuously helical" evidence="1">
    <location>
        <begin position="74"/>
        <end position="87"/>
    </location>
</feature>
<feature type="topological domain" description="Cytoplasmic" evidence="1">
    <location>
        <begin position="88"/>
        <end position="95"/>
    </location>
</feature>
<feature type="transmembrane region" description="Helical; Name=3" evidence="1">
    <location>
        <begin position="96"/>
        <end position="116"/>
    </location>
</feature>
<feature type="topological domain" description="Extracellular" evidence="1">
    <location>
        <begin position="117"/>
        <end position="151"/>
    </location>
</feature>
<feature type="transmembrane region" description="Helical; Name=4" evidence="1">
    <location>
        <begin position="152"/>
        <end position="172"/>
    </location>
</feature>
<feature type="topological domain" description="Cytoplasmic" evidence="1">
    <location>
        <begin position="173"/>
        <end position="184"/>
    </location>
</feature>
<feature type="transmembrane region" description="Helical; Name=5" evidence="1">
    <location>
        <begin position="185"/>
        <end position="201"/>
    </location>
</feature>
<feature type="topological domain" description="Extracellular" evidence="1">
    <location>
        <begin position="202"/>
        <end position="205"/>
    </location>
</feature>
<feature type="intramembrane region" description="Discontinuously helical" evidence="1">
    <location>
        <begin position="206"/>
        <end position="219"/>
    </location>
</feature>
<feature type="topological domain" description="Extracellular" evidence="1">
    <location>
        <begin position="220"/>
        <end position="237"/>
    </location>
</feature>
<feature type="transmembrane region" description="Helical; Name=6" evidence="1">
    <location>
        <begin position="238"/>
        <end position="259"/>
    </location>
</feature>
<feature type="topological domain" description="Cytoplasmic" evidence="1">
    <location>
        <begin position="260"/>
        <end position="269"/>
    </location>
</feature>
<feature type="short sequence motif" description="NPA 1" evidence="1">
    <location>
        <begin position="78"/>
        <end position="80"/>
    </location>
</feature>
<feature type="short sequence motif" description="NPA 2" evidence="1">
    <location>
        <begin position="210"/>
        <end position="212"/>
    </location>
</feature>
<feature type="site" description="Selectivity filter" evidence="1">
    <location>
        <position position="58"/>
    </location>
</feature>
<feature type="site" description="Important for permeability to glycerol" evidence="1">
    <location>
        <position position="119"/>
    </location>
</feature>
<feature type="site" description="Selectivity filter" evidence="1">
    <location>
        <position position="207"/>
    </location>
</feature>
<feature type="site" description="Selectivity filter" evidence="1">
    <location>
        <position position="213"/>
    </location>
</feature>
<feature type="modified residue" description="Phosphoserine" evidence="9">
    <location>
        <position position="4"/>
    </location>
</feature>
<dbReference type="EMBL" id="AB000507">
    <property type="protein sequence ID" value="BAA22053.2"/>
    <property type="molecule type" value="mRNA"/>
</dbReference>
<dbReference type="EMBL" id="AY120935">
    <property type="protein sequence ID" value="AAM81581.1"/>
    <property type="molecule type" value="mRNA"/>
</dbReference>
<dbReference type="EMBL" id="AY157737">
    <property type="protein sequence ID" value="AAN52930.1"/>
    <property type="molecule type" value="mRNA"/>
</dbReference>
<dbReference type="EMBL" id="BC072695">
    <property type="protein sequence ID" value="AAH72695.1"/>
    <property type="molecule type" value="mRNA"/>
</dbReference>
<dbReference type="RefSeq" id="NP_001416316.1">
    <property type="nucleotide sequence ID" value="NM_001429387.1"/>
</dbReference>
<dbReference type="RefSeq" id="NP_001416317.1">
    <property type="nucleotide sequence ID" value="NM_001429388.1"/>
</dbReference>
<dbReference type="RefSeq" id="NP_001416318.1">
    <property type="nucleotide sequence ID" value="NM_001429389.1"/>
</dbReference>
<dbReference type="RefSeq" id="NP_001416319.1">
    <property type="nucleotide sequence ID" value="NM_001429390.1"/>
</dbReference>
<dbReference type="RefSeq" id="NP_001416320.1">
    <property type="nucleotide sequence ID" value="NM_001429391.1"/>
</dbReference>
<dbReference type="RefSeq" id="NP_001416321.1">
    <property type="nucleotide sequence ID" value="NM_001429392.1"/>
</dbReference>
<dbReference type="RefSeq" id="NP_062030.2">
    <property type="nucleotide sequence ID" value="NM_019157.2"/>
</dbReference>
<dbReference type="RefSeq" id="XP_017448684.1">
    <property type="nucleotide sequence ID" value="XM_017593195.1"/>
</dbReference>
<dbReference type="SMR" id="P56403"/>
<dbReference type="FunCoup" id="P56403">
    <property type="interactions" value="121"/>
</dbReference>
<dbReference type="STRING" id="10116.ENSRNOP00000012974"/>
<dbReference type="iPTMnet" id="P56403"/>
<dbReference type="PhosphoSitePlus" id="P56403"/>
<dbReference type="PaxDb" id="10116-ENSRNOP00000012974"/>
<dbReference type="Ensembl" id="ENSRNOT00000012975.3">
    <property type="protein sequence ID" value="ENSRNOP00000012974.1"/>
    <property type="gene ID" value="ENSRNOG00000009686.3"/>
</dbReference>
<dbReference type="GeneID" id="29171"/>
<dbReference type="KEGG" id="rno:29171"/>
<dbReference type="UCSC" id="RGD:2145">
    <property type="organism name" value="rat"/>
</dbReference>
<dbReference type="AGR" id="RGD:2145"/>
<dbReference type="CTD" id="364"/>
<dbReference type="RGD" id="2145">
    <property type="gene designation" value="Aqp7"/>
</dbReference>
<dbReference type="eggNOG" id="KOG0224">
    <property type="taxonomic scope" value="Eukaryota"/>
</dbReference>
<dbReference type="GeneTree" id="ENSGT00940000159054"/>
<dbReference type="HOGENOM" id="CLU_020019_9_1_1"/>
<dbReference type="InParanoid" id="P56403"/>
<dbReference type="OMA" id="CALGRMP"/>
<dbReference type="PhylomeDB" id="P56403"/>
<dbReference type="TreeFam" id="TF313173"/>
<dbReference type="Reactome" id="R-RNO-432030">
    <property type="pathway name" value="Transport of glycerol from adipocytes to the liver by Aquaporins"/>
</dbReference>
<dbReference type="Reactome" id="R-RNO-432047">
    <property type="pathway name" value="Passive transport by Aquaporins"/>
</dbReference>
<dbReference type="PRO" id="PR:P56403"/>
<dbReference type="Proteomes" id="UP000002494">
    <property type="component" value="Chromosome 5"/>
</dbReference>
<dbReference type="Bgee" id="ENSRNOG00000009686">
    <property type="expression patterns" value="Expressed in testis and 15 other cell types or tissues"/>
</dbReference>
<dbReference type="GO" id="GO:0016323">
    <property type="term" value="C:basolateral plasma membrane"/>
    <property type="evidence" value="ECO:0000318"/>
    <property type="project" value="GO_Central"/>
</dbReference>
<dbReference type="GO" id="GO:0031526">
    <property type="term" value="C:brush border membrane"/>
    <property type="evidence" value="ECO:0000314"/>
    <property type="project" value="RGD"/>
</dbReference>
<dbReference type="GO" id="GO:0005911">
    <property type="term" value="C:cell-cell junction"/>
    <property type="evidence" value="ECO:0000266"/>
    <property type="project" value="RGD"/>
</dbReference>
<dbReference type="GO" id="GO:0005737">
    <property type="term" value="C:cytoplasm"/>
    <property type="evidence" value="ECO:0000266"/>
    <property type="project" value="RGD"/>
</dbReference>
<dbReference type="GO" id="GO:0030659">
    <property type="term" value="C:cytoplasmic vesicle membrane"/>
    <property type="evidence" value="ECO:0007669"/>
    <property type="project" value="UniProtKB-SubCell"/>
</dbReference>
<dbReference type="GO" id="GO:0005811">
    <property type="term" value="C:lipid droplet"/>
    <property type="evidence" value="ECO:0000266"/>
    <property type="project" value="RGD"/>
</dbReference>
<dbReference type="GO" id="GO:0005886">
    <property type="term" value="C:plasma membrane"/>
    <property type="evidence" value="ECO:0000250"/>
    <property type="project" value="UniProtKB"/>
</dbReference>
<dbReference type="GO" id="GO:1990904">
    <property type="term" value="C:ribonucleoprotein complex"/>
    <property type="evidence" value="ECO:0000314"/>
    <property type="project" value="RGD"/>
</dbReference>
<dbReference type="GO" id="GO:0015254">
    <property type="term" value="F:glycerol channel activity"/>
    <property type="evidence" value="ECO:0000314"/>
    <property type="project" value="RGD"/>
</dbReference>
<dbReference type="GO" id="GO:0015265">
    <property type="term" value="F:urea channel activity"/>
    <property type="evidence" value="ECO:0000314"/>
    <property type="project" value="RGD"/>
</dbReference>
<dbReference type="GO" id="GO:0015204">
    <property type="term" value="F:urea transmembrane transporter activity"/>
    <property type="evidence" value="ECO:0000266"/>
    <property type="project" value="RGD"/>
</dbReference>
<dbReference type="GO" id="GO:0015250">
    <property type="term" value="F:water channel activity"/>
    <property type="evidence" value="ECO:0000314"/>
    <property type="project" value="RGD"/>
</dbReference>
<dbReference type="GO" id="GO:0015793">
    <property type="term" value="P:glycerol transmembrane transport"/>
    <property type="evidence" value="ECO:0000314"/>
    <property type="project" value="RGD"/>
</dbReference>
<dbReference type="GO" id="GO:0070295">
    <property type="term" value="P:renal water absorption"/>
    <property type="evidence" value="ECO:0000266"/>
    <property type="project" value="RGD"/>
</dbReference>
<dbReference type="GO" id="GO:0009410">
    <property type="term" value="P:response to xenobiotic stimulus"/>
    <property type="evidence" value="ECO:0000270"/>
    <property type="project" value="RGD"/>
</dbReference>
<dbReference type="GO" id="GO:0007283">
    <property type="term" value="P:spermatogenesis"/>
    <property type="evidence" value="ECO:0000270"/>
    <property type="project" value="RGD"/>
</dbReference>
<dbReference type="GO" id="GO:0015840">
    <property type="term" value="P:urea transport"/>
    <property type="evidence" value="ECO:0000314"/>
    <property type="project" value="RGD"/>
</dbReference>
<dbReference type="GO" id="GO:0006833">
    <property type="term" value="P:water transport"/>
    <property type="evidence" value="ECO:0000314"/>
    <property type="project" value="RGD"/>
</dbReference>
<dbReference type="CDD" id="cd00333">
    <property type="entry name" value="MIP"/>
    <property type="match status" value="1"/>
</dbReference>
<dbReference type="FunFam" id="1.20.1080.10:FF:000005">
    <property type="entry name" value="Aquaporin 3"/>
    <property type="match status" value="1"/>
</dbReference>
<dbReference type="Gene3D" id="1.20.1080.10">
    <property type="entry name" value="Glycerol uptake facilitator protein"/>
    <property type="match status" value="1"/>
</dbReference>
<dbReference type="InterPro" id="IPR023271">
    <property type="entry name" value="Aquaporin-like"/>
</dbReference>
<dbReference type="InterPro" id="IPR000425">
    <property type="entry name" value="MIP"/>
</dbReference>
<dbReference type="InterPro" id="IPR050363">
    <property type="entry name" value="MIP/Aquaporin"/>
</dbReference>
<dbReference type="NCBIfam" id="TIGR00861">
    <property type="entry name" value="MIP"/>
    <property type="match status" value="1"/>
</dbReference>
<dbReference type="PANTHER" id="PTHR43829">
    <property type="entry name" value="AQUAPORIN OR AQUAGLYCEROPORIN RELATED"/>
    <property type="match status" value="1"/>
</dbReference>
<dbReference type="PANTHER" id="PTHR43829:SF15">
    <property type="entry name" value="AQUAPORIN-7"/>
    <property type="match status" value="1"/>
</dbReference>
<dbReference type="Pfam" id="PF00230">
    <property type="entry name" value="MIP"/>
    <property type="match status" value="1"/>
</dbReference>
<dbReference type="PRINTS" id="PR02019">
    <property type="entry name" value="AQUAPORIN7"/>
</dbReference>
<dbReference type="PRINTS" id="PR00783">
    <property type="entry name" value="MINTRINSICP"/>
</dbReference>
<dbReference type="SUPFAM" id="SSF81338">
    <property type="entry name" value="Aquaporin-like"/>
    <property type="match status" value="1"/>
</dbReference>
<name>AQP7_RAT</name>
<proteinExistence type="evidence at protein level"/>
<gene>
    <name evidence="8" type="primary">Aqp7</name>
</gene>
<comment type="function">
    <text evidence="2 5">Aquaglyceroporins form homotetrameric transmembrane channels, with each monomer independently mediating glycerol and water transport across the plasma membrane along their osmotic gradient. Could also be permeable to urea (PubMed:9252401). Mediates the efflux of glycerol, formed upon triglyceride hydrolysis, to avoid its accumulation in adipocytes and to make it available to other tissues. In the kidney, mediates the reabsorption of glycerol, preventing its loss in urine, again participating to energy homeostasis. In pancreatic beta cells, it also mediates the efflux of glycerol, regulating its intracellular levels (By similarity).</text>
</comment>
<comment type="catalytic activity">
    <reaction evidence="5">
        <text>glycerol(in) = glycerol(out)</text>
        <dbReference type="Rhea" id="RHEA:29675"/>
        <dbReference type="ChEBI" id="CHEBI:17754"/>
    </reaction>
</comment>
<comment type="catalytic activity">
    <reaction evidence="5">
        <text>H2O(in) = H2O(out)</text>
        <dbReference type="Rhea" id="RHEA:29667"/>
        <dbReference type="ChEBI" id="CHEBI:15377"/>
    </reaction>
</comment>
<comment type="catalytic activity">
    <reaction evidence="5">
        <text>urea(in) = urea(out)</text>
        <dbReference type="Rhea" id="RHEA:32799"/>
        <dbReference type="ChEBI" id="CHEBI:16199"/>
    </reaction>
</comment>
<comment type="activity regulation">
    <text evidence="1 5">Glycerol transport is regulated by pH, with the porin being permeable to glycerol at pH 7.4 but not at pH 5.5. Water permeability, however, is not influenced by pH (By similarity). Not inhibited by mercury ions.</text>
</comment>
<comment type="subunit">
    <text evidence="1">Homotetramer; each monomer provides an independent glycerol/water pore. Two homotetramers on opposing membranes can dimerize, forming a cell-cell junction. Interacts with PLIN1.</text>
</comment>
<comment type="subcellular location">
    <subcellularLocation>
        <location evidence="5">Cell membrane</location>
        <topology evidence="4">Multi-pass membrane protein</topology>
    </subcellularLocation>
    <subcellularLocation>
        <location evidence="2">Cytoplasmic vesicle membrane</location>
        <topology evidence="4">Multi-pass membrane protein</topology>
    </subcellularLocation>
    <subcellularLocation>
        <location evidence="2">Lipid droplet</location>
    </subcellularLocation>
    <text evidence="1 2">Internalized from the cell membrane in response to catecholamine-induced activation of PKA; detected on intracellular membranes and colocalizes with lipid droplets (By similarity). Colocalizes with PLIN1 in adipocytes, probably on lipid droplets (By similarity).</text>
</comment>
<comment type="tissue specificity">
    <text evidence="5">Detected in heart, kidney and testis.</text>
</comment>
<comment type="developmental stage">
    <text evidence="5">Expressed at late stages of spermatogenesis, from late to maturing spermatids (at protein level).</text>
</comment>
<comment type="domain">
    <text evidence="3">Aquaporins contain two tandem repeats each containing three membrane-spanning domains and a pore-forming loop with the signature motif Asn-Pro/Ala-Ala/Ser (NPA).</text>
</comment>
<comment type="PTM">
    <text evidence="1">Phosphorylation by PKA could prevent the interaction with PLIN1.</text>
</comment>
<comment type="similarity">
    <text evidence="6">Belongs to the MIP/aquaporin (TC 1.A.8) family.</text>
</comment>
<evidence type="ECO:0000250" key="1">
    <source>
        <dbReference type="UniProtKB" id="O14520"/>
    </source>
</evidence>
<evidence type="ECO:0000250" key="2">
    <source>
        <dbReference type="UniProtKB" id="O54794"/>
    </source>
</evidence>
<evidence type="ECO:0000250" key="3">
    <source>
        <dbReference type="UniProtKB" id="P55064"/>
    </source>
</evidence>
<evidence type="ECO:0000250" key="4">
    <source>
        <dbReference type="UniProtKB" id="P55087"/>
    </source>
</evidence>
<evidence type="ECO:0000269" key="5">
    <source>
    </source>
</evidence>
<evidence type="ECO:0000305" key="6"/>
<evidence type="ECO:0000305" key="7">
    <source>
    </source>
</evidence>
<evidence type="ECO:0000312" key="8">
    <source>
        <dbReference type="RGD" id="2145"/>
    </source>
</evidence>
<evidence type="ECO:0007744" key="9">
    <source>
    </source>
</evidence>
<reference key="1">
    <citation type="journal article" date="1997" name="J. Biol. Chem.">
        <title>Cloning and functional expression of a new water channel abundantly expressed in the testis permeable to water, glycerol, and urea.</title>
        <authorList>
            <person name="Ishibashi K."/>
            <person name="Kuwahara M."/>
            <person name="Gu Y."/>
            <person name="Kageyama Y."/>
            <person name="Tohsaka A."/>
            <person name="Suzuki F."/>
            <person name="Marumo F."/>
            <person name="Sasaki S."/>
        </authorList>
    </citation>
    <scope>NUCLEOTIDE SEQUENCE [MRNA]</scope>
    <scope>FUNCTION</scope>
    <scope>TRANSPORTER ACTIVITY</scope>
    <scope>ACTIVITY REGULATION</scope>
    <scope>SUBCELLULAR LOCATION</scope>
    <scope>TISSUE SPECIFICITY</scope>
    <scope>DEVELOPMENTAL STAGE</scope>
    <source>
        <strain>Sprague-Dawley</strain>
        <tissue>Testis</tissue>
    </source>
</reference>
<reference key="2">
    <citation type="submission" date="2002-10" db="EMBL/GenBank/DDBJ databases">
        <authorList>
            <person name="Ishibashi K."/>
        </authorList>
    </citation>
    <scope>SEQUENCE REVISION TO 27; 79; 93-94 AND 128-129</scope>
</reference>
<reference key="3">
    <citation type="journal article" date="2002" name="J. Biol. Chem.">
        <title>Cloning and functional characterization of a novel aquaporin from Xenopus laevis oocytes.</title>
        <authorList>
            <person name="Virkki L.V."/>
            <person name="Franke C."/>
            <person name="Somieski P."/>
            <person name="Boron W.F."/>
        </authorList>
    </citation>
    <scope>NUCLEOTIDE SEQUENCE [MRNA]</scope>
    <source>
        <strain>Sprague-Dawley</strain>
        <tissue>Kidney</tissue>
    </source>
</reference>
<reference key="4">
    <citation type="submission" date="2002-10" db="EMBL/GenBank/DDBJ databases">
        <title>Expression of aquaporin 7 in the testis of rats.</title>
        <authorList>
            <person name="Yang K."/>
            <person name="Yang B."/>
            <person name="Zhao X."/>
        </authorList>
    </citation>
    <scope>NUCLEOTIDE SEQUENCE [MRNA]</scope>
    <source>
        <strain>Wistar</strain>
        <tissue>Testis</tissue>
    </source>
</reference>
<reference key="5">
    <citation type="journal article" date="2004" name="Genome Res.">
        <title>The status, quality, and expansion of the NIH full-length cDNA project: the Mammalian Gene Collection (MGC).</title>
        <authorList>
            <consortium name="The MGC Project Team"/>
        </authorList>
    </citation>
    <scope>NUCLEOTIDE SEQUENCE [LARGE SCALE MRNA]</scope>
    <source>
        <tissue>Heart</tissue>
    </source>
</reference>
<reference key="6">
    <citation type="journal article" date="2012" name="Nat. Commun.">
        <title>Quantitative maps of protein phosphorylation sites across 14 different rat organs and tissues.</title>
        <authorList>
            <person name="Lundby A."/>
            <person name="Secher A."/>
            <person name="Lage K."/>
            <person name="Nordsborg N.B."/>
            <person name="Dmytriyev A."/>
            <person name="Lundby C."/>
            <person name="Olsen J.V."/>
        </authorList>
    </citation>
    <scope>PHOSPHORYLATION [LARGE SCALE ANALYSIS] AT SER-4</scope>
    <scope>IDENTIFICATION BY MASS SPECTROMETRY [LARGE SCALE ANALYSIS]</scope>
</reference>
<accession>P56403</accession>
<accession>Q8K3F5</accession>
<sequence>MAGSVLENIQSVLQKTWVREFLAEFLSTYVLMVFGLGSVAHMVLGERLGSYLGVNLGFGFGVTMGIHVAGGISGAHMNAAVTFTNCALGRMAWKKFPIYVLGQFLGSFLAAATTYLIFYGAINHYAGGELLVTGPKSTANIFATYLPEHMTLWRGFVDEVFVTGMLQLCIFAITDKLNSPALQGTEPLMIGILVCVLGVSLGMNTGYAINPSRDLPPRFFTFIAGWGKKVFSAGNNWWWVPVVAPLLGAYLGGIVYLGLIHAGIPPQGS</sequence>
<organism>
    <name type="scientific">Rattus norvegicus</name>
    <name type="common">Rat</name>
    <dbReference type="NCBI Taxonomy" id="10116"/>
    <lineage>
        <taxon>Eukaryota</taxon>
        <taxon>Metazoa</taxon>
        <taxon>Chordata</taxon>
        <taxon>Craniata</taxon>
        <taxon>Vertebrata</taxon>
        <taxon>Euteleostomi</taxon>
        <taxon>Mammalia</taxon>
        <taxon>Eutheria</taxon>
        <taxon>Euarchontoglires</taxon>
        <taxon>Glires</taxon>
        <taxon>Rodentia</taxon>
        <taxon>Myomorpha</taxon>
        <taxon>Muroidea</taxon>
        <taxon>Muridae</taxon>
        <taxon>Murinae</taxon>
        <taxon>Rattus</taxon>
    </lineage>
</organism>